<accession>Q92L39</accession>
<gene>
    <name evidence="1" type="primary">rplS</name>
    <name type="ordered locus">R03246</name>
    <name type="ORF">SMc03863</name>
</gene>
<reference key="1">
    <citation type="journal article" date="2001" name="Proc. Natl. Acad. Sci. U.S.A.">
        <title>Analysis of the chromosome sequence of the legume symbiont Sinorhizobium meliloti strain 1021.</title>
        <authorList>
            <person name="Capela D."/>
            <person name="Barloy-Hubler F."/>
            <person name="Gouzy J."/>
            <person name="Bothe G."/>
            <person name="Ampe F."/>
            <person name="Batut J."/>
            <person name="Boistard P."/>
            <person name="Becker A."/>
            <person name="Boutry M."/>
            <person name="Cadieu E."/>
            <person name="Dreano S."/>
            <person name="Gloux S."/>
            <person name="Godrie T."/>
            <person name="Goffeau A."/>
            <person name="Kahn D."/>
            <person name="Kiss E."/>
            <person name="Lelaure V."/>
            <person name="Masuy D."/>
            <person name="Pohl T."/>
            <person name="Portetelle D."/>
            <person name="Puehler A."/>
            <person name="Purnelle B."/>
            <person name="Ramsperger U."/>
            <person name="Renard C."/>
            <person name="Thebault P."/>
            <person name="Vandenbol M."/>
            <person name="Weidner S."/>
            <person name="Galibert F."/>
        </authorList>
    </citation>
    <scope>NUCLEOTIDE SEQUENCE [LARGE SCALE GENOMIC DNA]</scope>
    <source>
        <strain>1021</strain>
    </source>
</reference>
<reference key="2">
    <citation type="journal article" date="2001" name="Science">
        <title>The composite genome of the legume symbiont Sinorhizobium meliloti.</title>
        <authorList>
            <person name="Galibert F."/>
            <person name="Finan T.M."/>
            <person name="Long S.R."/>
            <person name="Puehler A."/>
            <person name="Abola P."/>
            <person name="Ampe F."/>
            <person name="Barloy-Hubler F."/>
            <person name="Barnett M.J."/>
            <person name="Becker A."/>
            <person name="Boistard P."/>
            <person name="Bothe G."/>
            <person name="Boutry M."/>
            <person name="Bowser L."/>
            <person name="Buhrmester J."/>
            <person name="Cadieu E."/>
            <person name="Capela D."/>
            <person name="Chain P."/>
            <person name="Cowie A."/>
            <person name="Davis R.W."/>
            <person name="Dreano S."/>
            <person name="Federspiel N.A."/>
            <person name="Fisher R.F."/>
            <person name="Gloux S."/>
            <person name="Godrie T."/>
            <person name="Goffeau A."/>
            <person name="Golding B."/>
            <person name="Gouzy J."/>
            <person name="Gurjal M."/>
            <person name="Hernandez-Lucas I."/>
            <person name="Hong A."/>
            <person name="Huizar L."/>
            <person name="Hyman R.W."/>
            <person name="Jones T."/>
            <person name="Kahn D."/>
            <person name="Kahn M.L."/>
            <person name="Kalman S."/>
            <person name="Keating D.H."/>
            <person name="Kiss E."/>
            <person name="Komp C."/>
            <person name="Lelaure V."/>
            <person name="Masuy D."/>
            <person name="Palm C."/>
            <person name="Peck M.C."/>
            <person name="Pohl T.M."/>
            <person name="Portetelle D."/>
            <person name="Purnelle B."/>
            <person name="Ramsperger U."/>
            <person name="Surzycki R."/>
            <person name="Thebault P."/>
            <person name="Vandenbol M."/>
            <person name="Vorhoelter F.J."/>
            <person name="Weidner S."/>
            <person name="Wells D.H."/>
            <person name="Wong K."/>
            <person name="Yeh K.-C."/>
            <person name="Batut J."/>
        </authorList>
    </citation>
    <scope>NUCLEOTIDE SEQUENCE [LARGE SCALE GENOMIC DNA]</scope>
    <source>
        <strain>1021</strain>
    </source>
</reference>
<proteinExistence type="inferred from homology"/>
<evidence type="ECO:0000255" key="1">
    <source>
        <dbReference type="HAMAP-Rule" id="MF_00402"/>
    </source>
</evidence>
<evidence type="ECO:0000305" key="2"/>
<dbReference type="EMBL" id="AL591688">
    <property type="protein sequence ID" value="CAC47825.1"/>
    <property type="molecule type" value="Genomic_DNA"/>
</dbReference>
<dbReference type="RefSeq" id="NP_387352.1">
    <property type="nucleotide sequence ID" value="NC_003047.1"/>
</dbReference>
<dbReference type="RefSeq" id="WP_003529750.1">
    <property type="nucleotide sequence ID" value="NC_003047.1"/>
</dbReference>
<dbReference type="SMR" id="Q92L39"/>
<dbReference type="EnsemblBacteria" id="CAC47825">
    <property type="protein sequence ID" value="CAC47825"/>
    <property type="gene ID" value="SMc03863"/>
</dbReference>
<dbReference type="GeneID" id="89574224"/>
<dbReference type="KEGG" id="sme:SMc03863"/>
<dbReference type="PATRIC" id="fig|266834.11.peg.4799"/>
<dbReference type="eggNOG" id="COG0335">
    <property type="taxonomic scope" value="Bacteria"/>
</dbReference>
<dbReference type="HOGENOM" id="CLU_103507_0_0_5"/>
<dbReference type="OrthoDB" id="9803541at2"/>
<dbReference type="Proteomes" id="UP000001976">
    <property type="component" value="Chromosome"/>
</dbReference>
<dbReference type="GO" id="GO:0022625">
    <property type="term" value="C:cytosolic large ribosomal subunit"/>
    <property type="evidence" value="ECO:0007669"/>
    <property type="project" value="TreeGrafter"/>
</dbReference>
<dbReference type="GO" id="GO:0003735">
    <property type="term" value="F:structural constituent of ribosome"/>
    <property type="evidence" value="ECO:0007669"/>
    <property type="project" value="InterPro"/>
</dbReference>
<dbReference type="GO" id="GO:0006412">
    <property type="term" value="P:translation"/>
    <property type="evidence" value="ECO:0007669"/>
    <property type="project" value="UniProtKB-UniRule"/>
</dbReference>
<dbReference type="FunFam" id="2.30.30.790:FF:000001">
    <property type="entry name" value="50S ribosomal protein L19"/>
    <property type="match status" value="1"/>
</dbReference>
<dbReference type="Gene3D" id="2.30.30.790">
    <property type="match status" value="1"/>
</dbReference>
<dbReference type="HAMAP" id="MF_00402">
    <property type="entry name" value="Ribosomal_bL19"/>
    <property type="match status" value="1"/>
</dbReference>
<dbReference type="InterPro" id="IPR001857">
    <property type="entry name" value="Ribosomal_bL19"/>
</dbReference>
<dbReference type="InterPro" id="IPR018257">
    <property type="entry name" value="Ribosomal_bL19_CS"/>
</dbReference>
<dbReference type="InterPro" id="IPR038657">
    <property type="entry name" value="Ribosomal_bL19_sf"/>
</dbReference>
<dbReference type="InterPro" id="IPR008991">
    <property type="entry name" value="Translation_prot_SH3-like_sf"/>
</dbReference>
<dbReference type="NCBIfam" id="TIGR01024">
    <property type="entry name" value="rplS_bact"/>
    <property type="match status" value="1"/>
</dbReference>
<dbReference type="PANTHER" id="PTHR15680:SF9">
    <property type="entry name" value="LARGE RIBOSOMAL SUBUNIT PROTEIN BL19M"/>
    <property type="match status" value="1"/>
</dbReference>
<dbReference type="PANTHER" id="PTHR15680">
    <property type="entry name" value="RIBOSOMAL PROTEIN L19"/>
    <property type="match status" value="1"/>
</dbReference>
<dbReference type="Pfam" id="PF01245">
    <property type="entry name" value="Ribosomal_L19"/>
    <property type="match status" value="1"/>
</dbReference>
<dbReference type="PRINTS" id="PR00061">
    <property type="entry name" value="RIBOSOMALL19"/>
</dbReference>
<dbReference type="SUPFAM" id="SSF50104">
    <property type="entry name" value="Translation proteins SH3-like domain"/>
    <property type="match status" value="1"/>
</dbReference>
<dbReference type="PROSITE" id="PS01015">
    <property type="entry name" value="RIBOSOMAL_L19"/>
    <property type="match status" value="1"/>
</dbReference>
<feature type="chain" id="PRO_0000163515" description="Large ribosomal subunit protein bL19">
    <location>
        <begin position="1"/>
        <end position="177"/>
    </location>
</feature>
<protein>
    <recommendedName>
        <fullName evidence="1">Large ribosomal subunit protein bL19</fullName>
    </recommendedName>
    <alternativeName>
        <fullName evidence="2">50S ribosomal protein L19</fullName>
    </alternativeName>
</protein>
<keyword id="KW-1185">Reference proteome</keyword>
<keyword id="KW-0687">Ribonucleoprotein</keyword>
<keyword id="KW-0689">Ribosomal protein</keyword>
<comment type="function">
    <text evidence="1">This protein is located at the 30S-50S ribosomal subunit interface and may play a role in the structure and function of the aminoacyl-tRNA binding site.</text>
</comment>
<comment type="similarity">
    <text evidence="1">Belongs to the bacterial ribosomal protein bL19 family.</text>
</comment>
<name>RL19_RHIME</name>
<sequence length="177" mass="19255">MNIIQQLEAEQAAKIAAKRTLPEFSPGDTVRVNVRVVEGNRTRVQAYEGVCIARSGGGINESFTVRKISYGEGVERVFPVYSPLVESVDVVRRGKVRRAKLYYLRDRRGKSARIVENTGTRARKLNDAERQAVVEEKARIEAEKVAAAQALAAEKAAAEAAEAKAAEEAKAAEAAAE</sequence>
<organism>
    <name type="scientific">Rhizobium meliloti (strain 1021)</name>
    <name type="common">Ensifer meliloti</name>
    <name type="synonym">Sinorhizobium meliloti</name>
    <dbReference type="NCBI Taxonomy" id="266834"/>
    <lineage>
        <taxon>Bacteria</taxon>
        <taxon>Pseudomonadati</taxon>
        <taxon>Pseudomonadota</taxon>
        <taxon>Alphaproteobacteria</taxon>
        <taxon>Hyphomicrobiales</taxon>
        <taxon>Rhizobiaceae</taxon>
        <taxon>Sinorhizobium/Ensifer group</taxon>
        <taxon>Sinorhizobium</taxon>
    </lineage>
</organism>